<sequence>MALPTIAIVGRPNVGKSTLFNRIAGERISIVEDVEGVTRDRIYATADWLNRKFSIIDTGGIDDVDAPFMEQIKHQAEIAMDEADVIVFVVSGKEGITDADEYVARMLYKTHKPIILAVNKVDNPEMRNEIFDFYALGLGDPFPVSSVHGIGTGDVLDAIVENLPNEEVAENPDMIKFSLIGRPNVGKSSLINAILGEERVIASPVAGTTRDAIDTVFTDSEGQEFTMIDTAGMRKSGKVYENTEKYSVMRAMRAIDRSDVVLMVLNAEEGIREYDKRIAGFAHEAGKGIVIVVNKWDTLEKDNHTMKDWEADIRDQFQYLSYAPIIFVSALTKQRLHKLPDMIKQISQSQNTRIPSAVLNDVIMDAIAINPTPTDKGKRLKIFYATQVATKPPTFVIFVNEEELMHFSYLRFLENQIRKAFVFEGTPIHLIARKRK</sequence>
<reference key="1">
    <citation type="journal article" date="2007" name="J. Bacteriol.">
        <title>Genome-wide transcriptional changes in Streptococcus gordonii in response to competence signaling peptide.</title>
        <authorList>
            <person name="Vickerman M.M."/>
            <person name="Iobst S."/>
            <person name="Jesionowski A.M."/>
            <person name="Gill S.R."/>
        </authorList>
    </citation>
    <scope>NUCLEOTIDE SEQUENCE [LARGE SCALE GENOMIC DNA]</scope>
    <source>
        <strain>Challis / ATCC 35105 / BCRC 15272 / CH1 / DL1 / V288</strain>
    </source>
</reference>
<keyword id="KW-0342">GTP-binding</keyword>
<keyword id="KW-0547">Nucleotide-binding</keyword>
<keyword id="KW-1185">Reference proteome</keyword>
<keyword id="KW-0677">Repeat</keyword>
<keyword id="KW-0690">Ribosome biogenesis</keyword>
<name>DER_STRGC</name>
<protein>
    <recommendedName>
        <fullName evidence="1">GTPase Der</fullName>
    </recommendedName>
    <alternativeName>
        <fullName evidence="1">GTP-binding protein EngA</fullName>
    </alternativeName>
</protein>
<organism>
    <name type="scientific">Streptococcus gordonii (strain Challis / ATCC 35105 / BCRC 15272 / CH1 / DL1 / V288)</name>
    <dbReference type="NCBI Taxonomy" id="467705"/>
    <lineage>
        <taxon>Bacteria</taxon>
        <taxon>Bacillati</taxon>
        <taxon>Bacillota</taxon>
        <taxon>Bacilli</taxon>
        <taxon>Lactobacillales</taxon>
        <taxon>Streptococcaceae</taxon>
        <taxon>Streptococcus</taxon>
    </lineage>
</organism>
<dbReference type="EMBL" id="CP000725">
    <property type="protein sequence ID" value="ABV09995.1"/>
    <property type="molecule type" value="Genomic_DNA"/>
</dbReference>
<dbReference type="RefSeq" id="WP_012000018.1">
    <property type="nucleotide sequence ID" value="NC_009785.1"/>
</dbReference>
<dbReference type="SMR" id="A8AVL8"/>
<dbReference type="STRING" id="467705.SGO_0512"/>
<dbReference type="KEGG" id="sgo:SGO_0512"/>
<dbReference type="eggNOG" id="COG1160">
    <property type="taxonomic scope" value="Bacteria"/>
</dbReference>
<dbReference type="HOGENOM" id="CLU_016077_6_2_9"/>
<dbReference type="Proteomes" id="UP000001131">
    <property type="component" value="Chromosome"/>
</dbReference>
<dbReference type="GO" id="GO:0005525">
    <property type="term" value="F:GTP binding"/>
    <property type="evidence" value="ECO:0007669"/>
    <property type="project" value="UniProtKB-UniRule"/>
</dbReference>
<dbReference type="GO" id="GO:0043022">
    <property type="term" value="F:ribosome binding"/>
    <property type="evidence" value="ECO:0007669"/>
    <property type="project" value="TreeGrafter"/>
</dbReference>
<dbReference type="GO" id="GO:0042254">
    <property type="term" value="P:ribosome biogenesis"/>
    <property type="evidence" value="ECO:0007669"/>
    <property type="project" value="UniProtKB-KW"/>
</dbReference>
<dbReference type="CDD" id="cd01894">
    <property type="entry name" value="EngA1"/>
    <property type="match status" value="1"/>
</dbReference>
<dbReference type="CDD" id="cd01895">
    <property type="entry name" value="EngA2"/>
    <property type="match status" value="1"/>
</dbReference>
<dbReference type="FunFam" id="3.30.300.20:FF:000004">
    <property type="entry name" value="GTPase Der"/>
    <property type="match status" value="1"/>
</dbReference>
<dbReference type="FunFam" id="3.40.50.300:FF:000040">
    <property type="entry name" value="GTPase Der"/>
    <property type="match status" value="1"/>
</dbReference>
<dbReference type="FunFam" id="3.40.50.300:FF:000057">
    <property type="entry name" value="GTPase Der"/>
    <property type="match status" value="1"/>
</dbReference>
<dbReference type="Gene3D" id="3.30.300.20">
    <property type="match status" value="1"/>
</dbReference>
<dbReference type="Gene3D" id="3.40.50.300">
    <property type="entry name" value="P-loop containing nucleotide triphosphate hydrolases"/>
    <property type="match status" value="2"/>
</dbReference>
<dbReference type="HAMAP" id="MF_00195">
    <property type="entry name" value="GTPase_Der"/>
    <property type="match status" value="1"/>
</dbReference>
<dbReference type="InterPro" id="IPR031166">
    <property type="entry name" value="G_ENGA"/>
</dbReference>
<dbReference type="InterPro" id="IPR006073">
    <property type="entry name" value="GTP-bd"/>
</dbReference>
<dbReference type="InterPro" id="IPR016484">
    <property type="entry name" value="GTPase_Der"/>
</dbReference>
<dbReference type="InterPro" id="IPR032859">
    <property type="entry name" value="KH_dom-like"/>
</dbReference>
<dbReference type="InterPro" id="IPR015946">
    <property type="entry name" value="KH_dom-like_a/b"/>
</dbReference>
<dbReference type="InterPro" id="IPR027417">
    <property type="entry name" value="P-loop_NTPase"/>
</dbReference>
<dbReference type="InterPro" id="IPR005225">
    <property type="entry name" value="Small_GTP-bd"/>
</dbReference>
<dbReference type="NCBIfam" id="TIGR03594">
    <property type="entry name" value="GTPase_EngA"/>
    <property type="match status" value="1"/>
</dbReference>
<dbReference type="NCBIfam" id="TIGR00231">
    <property type="entry name" value="small_GTP"/>
    <property type="match status" value="2"/>
</dbReference>
<dbReference type="PANTHER" id="PTHR43834">
    <property type="entry name" value="GTPASE DER"/>
    <property type="match status" value="1"/>
</dbReference>
<dbReference type="PANTHER" id="PTHR43834:SF6">
    <property type="entry name" value="GTPASE DER"/>
    <property type="match status" value="1"/>
</dbReference>
<dbReference type="Pfam" id="PF14714">
    <property type="entry name" value="KH_dom-like"/>
    <property type="match status" value="1"/>
</dbReference>
<dbReference type="Pfam" id="PF01926">
    <property type="entry name" value="MMR_HSR1"/>
    <property type="match status" value="2"/>
</dbReference>
<dbReference type="PIRSF" id="PIRSF006485">
    <property type="entry name" value="GTP-binding_EngA"/>
    <property type="match status" value="1"/>
</dbReference>
<dbReference type="PRINTS" id="PR00326">
    <property type="entry name" value="GTP1OBG"/>
</dbReference>
<dbReference type="SUPFAM" id="SSF52540">
    <property type="entry name" value="P-loop containing nucleoside triphosphate hydrolases"/>
    <property type="match status" value="2"/>
</dbReference>
<dbReference type="PROSITE" id="PS51712">
    <property type="entry name" value="G_ENGA"/>
    <property type="match status" value="2"/>
</dbReference>
<accession>A8AVL8</accession>
<comment type="function">
    <text evidence="1">GTPase that plays an essential role in the late steps of ribosome biogenesis.</text>
</comment>
<comment type="subunit">
    <text evidence="1">Associates with the 50S ribosomal subunit.</text>
</comment>
<comment type="similarity">
    <text evidence="1">Belongs to the TRAFAC class TrmE-Era-EngA-EngB-Septin-like GTPase superfamily. EngA (Der) GTPase family.</text>
</comment>
<proteinExistence type="inferred from homology"/>
<feature type="chain" id="PRO_1000077679" description="GTPase Der">
    <location>
        <begin position="1"/>
        <end position="436"/>
    </location>
</feature>
<feature type="domain" description="EngA-type G 1">
    <location>
        <begin position="4"/>
        <end position="167"/>
    </location>
</feature>
<feature type="domain" description="EngA-type G 2">
    <location>
        <begin position="175"/>
        <end position="351"/>
    </location>
</feature>
<feature type="domain" description="KH-like" evidence="1">
    <location>
        <begin position="352"/>
        <end position="436"/>
    </location>
</feature>
<feature type="binding site" evidence="1">
    <location>
        <begin position="10"/>
        <end position="17"/>
    </location>
    <ligand>
        <name>GTP</name>
        <dbReference type="ChEBI" id="CHEBI:37565"/>
        <label>1</label>
    </ligand>
</feature>
<feature type="binding site" evidence="1">
    <location>
        <begin position="57"/>
        <end position="61"/>
    </location>
    <ligand>
        <name>GTP</name>
        <dbReference type="ChEBI" id="CHEBI:37565"/>
        <label>1</label>
    </ligand>
</feature>
<feature type="binding site" evidence="1">
    <location>
        <begin position="119"/>
        <end position="122"/>
    </location>
    <ligand>
        <name>GTP</name>
        <dbReference type="ChEBI" id="CHEBI:37565"/>
        <label>1</label>
    </ligand>
</feature>
<feature type="binding site" evidence="1">
    <location>
        <begin position="181"/>
        <end position="188"/>
    </location>
    <ligand>
        <name>GTP</name>
        <dbReference type="ChEBI" id="CHEBI:37565"/>
        <label>2</label>
    </ligand>
</feature>
<feature type="binding site" evidence="1">
    <location>
        <begin position="229"/>
        <end position="233"/>
    </location>
    <ligand>
        <name>GTP</name>
        <dbReference type="ChEBI" id="CHEBI:37565"/>
        <label>2</label>
    </ligand>
</feature>
<feature type="binding site" evidence="1">
    <location>
        <begin position="294"/>
        <end position="297"/>
    </location>
    <ligand>
        <name>GTP</name>
        <dbReference type="ChEBI" id="CHEBI:37565"/>
        <label>2</label>
    </ligand>
</feature>
<evidence type="ECO:0000255" key="1">
    <source>
        <dbReference type="HAMAP-Rule" id="MF_00195"/>
    </source>
</evidence>
<gene>
    <name evidence="1" type="primary">der</name>
    <name type="synonym">engA</name>
    <name type="ordered locus">SGO_0512</name>
</gene>